<keyword id="KW-0687">Ribonucleoprotein</keyword>
<keyword id="KW-0689">Ribosomal protein</keyword>
<dbReference type="EMBL" id="CP000099">
    <property type="protein sequence ID" value="AAZ70382.1"/>
    <property type="status" value="ALT_INIT"/>
    <property type="molecule type" value="Genomic_DNA"/>
</dbReference>
<dbReference type="SMR" id="Q46CL0"/>
<dbReference type="STRING" id="269797.Mbar_A1423"/>
<dbReference type="PaxDb" id="269797-Mbar_A1423"/>
<dbReference type="KEGG" id="mba:Mbar_A1423"/>
<dbReference type="eggNOG" id="arCOG04245">
    <property type="taxonomic scope" value="Archaea"/>
</dbReference>
<dbReference type="HOGENOM" id="CLU_058171_3_0_2"/>
<dbReference type="GO" id="GO:0015935">
    <property type="term" value="C:small ribosomal subunit"/>
    <property type="evidence" value="ECO:0007669"/>
    <property type="project" value="InterPro"/>
</dbReference>
<dbReference type="GO" id="GO:0003735">
    <property type="term" value="F:structural constituent of ribosome"/>
    <property type="evidence" value="ECO:0007669"/>
    <property type="project" value="InterPro"/>
</dbReference>
<dbReference type="GO" id="GO:0006412">
    <property type="term" value="P:translation"/>
    <property type="evidence" value="ECO:0007669"/>
    <property type="project" value="UniProtKB-UniRule"/>
</dbReference>
<dbReference type="FunFam" id="3.40.50.10490:FF:000030">
    <property type="entry name" value="30S ribosomal protein S2"/>
    <property type="match status" value="1"/>
</dbReference>
<dbReference type="Gene3D" id="3.40.50.10490">
    <property type="entry name" value="Glucose-6-phosphate isomerase like protein, domain 1"/>
    <property type="match status" value="1"/>
</dbReference>
<dbReference type="HAMAP" id="MF_00291_A">
    <property type="entry name" value="Ribosomal_uS2_A"/>
    <property type="match status" value="1"/>
</dbReference>
<dbReference type="InterPro" id="IPR001865">
    <property type="entry name" value="Ribosomal_uS2"/>
</dbReference>
<dbReference type="InterPro" id="IPR023454">
    <property type="entry name" value="Ribosomal_uS2_arc"/>
</dbReference>
<dbReference type="InterPro" id="IPR018130">
    <property type="entry name" value="Ribosomal_uS2_CS"/>
</dbReference>
<dbReference type="InterPro" id="IPR005707">
    <property type="entry name" value="Ribosomal_uS2_euk/arc"/>
</dbReference>
<dbReference type="InterPro" id="IPR023591">
    <property type="entry name" value="Ribosomal_uS2_flav_dom_sf"/>
</dbReference>
<dbReference type="NCBIfam" id="TIGR01012">
    <property type="entry name" value="uS2_euk_arch"/>
    <property type="match status" value="1"/>
</dbReference>
<dbReference type="PANTHER" id="PTHR11489">
    <property type="entry name" value="40S RIBOSOMAL PROTEIN SA"/>
    <property type="match status" value="1"/>
</dbReference>
<dbReference type="Pfam" id="PF00318">
    <property type="entry name" value="Ribosomal_S2"/>
    <property type="match status" value="2"/>
</dbReference>
<dbReference type="PRINTS" id="PR00395">
    <property type="entry name" value="RIBOSOMALS2"/>
</dbReference>
<dbReference type="SUPFAM" id="SSF52313">
    <property type="entry name" value="Ribosomal protein S2"/>
    <property type="match status" value="1"/>
</dbReference>
<dbReference type="PROSITE" id="PS00962">
    <property type="entry name" value="RIBOSOMAL_S2_1"/>
    <property type="match status" value="1"/>
</dbReference>
<dbReference type="PROSITE" id="PS00963">
    <property type="entry name" value="RIBOSOMAL_S2_2"/>
    <property type="match status" value="1"/>
</dbReference>
<proteinExistence type="inferred from homology"/>
<comment type="similarity">
    <text evidence="1">Belongs to the universal ribosomal protein uS2 family.</text>
</comment>
<comment type="sequence caution" evidence="3">
    <conflict type="erroneous initiation">
        <sequence resource="EMBL-CDS" id="AAZ70382"/>
    </conflict>
</comment>
<reference key="1">
    <citation type="journal article" date="2006" name="J. Bacteriol.">
        <title>The Methanosarcina barkeri genome: comparative analysis with Methanosarcina acetivorans and Methanosarcina mazei reveals extensive rearrangement within methanosarcinal genomes.</title>
        <authorList>
            <person name="Maeder D.L."/>
            <person name="Anderson I."/>
            <person name="Brettin T.S."/>
            <person name="Bruce D.C."/>
            <person name="Gilna P."/>
            <person name="Han C.S."/>
            <person name="Lapidus A."/>
            <person name="Metcalf W.W."/>
            <person name="Saunders E."/>
            <person name="Tapia R."/>
            <person name="Sowers K.R."/>
        </authorList>
    </citation>
    <scope>NUCLEOTIDE SEQUENCE [LARGE SCALE GENOMIC DNA]</scope>
    <source>
        <strain>Fusaro / DSM 804</strain>
    </source>
</reference>
<sequence>MAEAKPAPEKEAAAKTESVPVETEGEGPSVKEGSTSLVSIDEYLAAGVHIGTQQKTQDMMRFVYRVRTDGLYVLDIQSTDERIRVAAKLLSHYDPSRILVVSSRQYGQHPARMFSRALSTKSMLGRFIPGLLTNPQIHGFFEPDIVIVTDPAGDAQVLKEASSIGVPIVALCDTNNLTSNVDLVIPTNNKGRKALSLVYWLLAREVSRLNSTPFNYELTDFETPL</sequence>
<name>RS2_METBF</name>
<organism>
    <name type="scientific">Methanosarcina barkeri (strain Fusaro / DSM 804)</name>
    <dbReference type="NCBI Taxonomy" id="269797"/>
    <lineage>
        <taxon>Archaea</taxon>
        <taxon>Methanobacteriati</taxon>
        <taxon>Methanobacteriota</taxon>
        <taxon>Stenosarchaea group</taxon>
        <taxon>Methanomicrobia</taxon>
        <taxon>Methanosarcinales</taxon>
        <taxon>Methanosarcinaceae</taxon>
        <taxon>Methanosarcina</taxon>
    </lineage>
</organism>
<accession>Q46CL0</accession>
<evidence type="ECO:0000255" key="1">
    <source>
        <dbReference type="HAMAP-Rule" id="MF_00291"/>
    </source>
</evidence>
<evidence type="ECO:0000256" key="2">
    <source>
        <dbReference type="SAM" id="MobiDB-lite"/>
    </source>
</evidence>
<evidence type="ECO:0000305" key="3"/>
<protein>
    <recommendedName>
        <fullName evidence="1">Small ribosomal subunit protein uS2</fullName>
    </recommendedName>
    <alternativeName>
        <fullName evidence="3">30S ribosomal protein S2</fullName>
    </alternativeName>
</protein>
<feature type="chain" id="PRO_0000352071" description="Small ribosomal subunit protein uS2">
    <location>
        <begin position="1"/>
        <end position="225"/>
    </location>
</feature>
<feature type="region of interest" description="Disordered" evidence="2">
    <location>
        <begin position="1"/>
        <end position="33"/>
    </location>
</feature>
<feature type="compositionally biased region" description="Basic and acidic residues" evidence="2">
    <location>
        <begin position="1"/>
        <end position="14"/>
    </location>
</feature>
<gene>
    <name evidence="1" type="primary">rps2</name>
    <name type="ordered locus">Mbar_A1423</name>
</gene>